<protein>
    <recommendedName>
        <fullName evidence="1 6">26S proteasome non-ATPase regulatory subunit 13</fullName>
    </recommendedName>
    <alternativeName>
        <fullName>26S proteasome regulatory subunit RPN9</fullName>
    </alternativeName>
    <alternativeName>
        <fullName evidence="1">26S proteasome regulatory subunit S11</fullName>
    </alternativeName>
    <alternativeName>
        <fullName evidence="1">26S proteasome regulatory subunit p40.5</fullName>
    </alternativeName>
</protein>
<proteinExistence type="evidence at protein level"/>
<name>PSD13_RAT</name>
<comment type="function">
    <text evidence="1">Component of the 26S proteasome, a multiprotein complex involved in the ATP-dependent degradation of ubiquitinated proteins. This complex plays a key role in the maintenance of protein homeostasis by removing misfolded or damaged proteins, which could impair cellular functions, and by removing proteins whose functions are no longer required. Therefore, the proteasome participates in numerous cellular processes, including cell cycle progression, apoptosis, or DNA damage repair.</text>
</comment>
<comment type="subunit">
    <text evidence="1">Component of the 19S proteasome regulatory particle complex. The 26S proteasome consists of a 20S core particle (CP) and two 19S regulatory subunits (RP). The regulatory particle is made of a lid composed of 9 subunits including PSMD13, a base containing 6 ATPases and few additional components.</text>
</comment>
<comment type="similarity">
    <text evidence="2">Belongs to the proteasome subunit S11 family.</text>
</comment>
<organism>
    <name type="scientific">Rattus norvegicus</name>
    <name type="common">Rat</name>
    <dbReference type="NCBI Taxonomy" id="10116"/>
    <lineage>
        <taxon>Eukaryota</taxon>
        <taxon>Metazoa</taxon>
        <taxon>Chordata</taxon>
        <taxon>Craniata</taxon>
        <taxon>Vertebrata</taxon>
        <taxon>Euteleostomi</taxon>
        <taxon>Mammalia</taxon>
        <taxon>Eutheria</taxon>
        <taxon>Euarchontoglires</taxon>
        <taxon>Glires</taxon>
        <taxon>Rodentia</taxon>
        <taxon>Myomorpha</taxon>
        <taxon>Muroidea</taxon>
        <taxon>Muridae</taxon>
        <taxon>Murinae</taxon>
        <taxon>Rattus</taxon>
    </lineage>
</organism>
<dbReference type="EMBL" id="CH473953">
    <property type="protein sequence ID" value="EDM11946.1"/>
    <property type="molecule type" value="Genomic_DNA"/>
</dbReference>
<dbReference type="EMBL" id="BC158732">
    <property type="protein sequence ID" value="AAI58733.1"/>
    <property type="molecule type" value="mRNA"/>
</dbReference>
<dbReference type="RefSeq" id="NP_001102395.1">
    <property type="nucleotide sequence ID" value="NM_001108925.2"/>
</dbReference>
<dbReference type="PDB" id="6EPC">
    <property type="method" value="EM"/>
    <property type="resolution" value="12.30 A"/>
    <property type="chains" value="O=1-376"/>
</dbReference>
<dbReference type="PDB" id="6EPD">
    <property type="method" value="EM"/>
    <property type="resolution" value="15.40 A"/>
    <property type="chains" value="O=1-376"/>
</dbReference>
<dbReference type="PDB" id="6EPE">
    <property type="method" value="EM"/>
    <property type="resolution" value="12.80 A"/>
    <property type="chains" value="O=1-376"/>
</dbReference>
<dbReference type="PDB" id="6EPF">
    <property type="method" value="EM"/>
    <property type="resolution" value="11.80 A"/>
    <property type="chains" value="O=1-376"/>
</dbReference>
<dbReference type="PDBsum" id="6EPC"/>
<dbReference type="PDBsum" id="6EPD"/>
<dbReference type="PDBsum" id="6EPE"/>
<dbReference type="PDBsum" id="6EPF"/>
<dbReference type="EMDB" id="EMD-3913"/>
<dbReference type="EMDB" id="EMD-3914"/>
<dbReference type="EMDB" id="EMD-3915"/>
<dbReference type="EMDB" id="EMD-3916"/>
<dbReference type="SMR" id="B0BN93"/>
<dbReference type="BioGRID" id="265335">
    <property type="interactions" value="4"/>
</dbReference>
<dbReference type="ComplexPortal" id="CPX-8962">
    <property type="entry name" value="19S proteasome regulatory complex"/>
</dbReference>
<dbReference type="ComplexPortal" id="CPX-8965">
    <property type="entry name" value="30S proteasome complex"/>
</dbReference>
<dbReference type="FunCoup" id="B0BN93">
    <property type="interactions" value="4162"/>
</dbReference>
<dbReference type="IntAct" id="B0BN93">
    <property type="interactions" value="3"/>
</dbReference>
<dbReference type="STRING" id="10116.ENSRNOP00000019642"/>
<dbReference type="iPTMnet" id="B0BN93"/>
<dbReference type="PhosphoSitePlus" id="B0BN93"/>
<dbReference type="jPOST" id="B0BN93"/>
<dbReference type="PaxDb" id="10116-ENSRNOP00000019642"/>
<dbReference type="PeptideAtlas" id="B0BN93"/>
<dbReference type="GeneID" id="365388"/>
<dbReference type="KEGG" id="rno:365388"/>
<dbReference type="UCSC" id="RGD:1305236">
    <property type="organism name" value="rat"/>
</dbReference>
<dbReference type="AGR" id="RGD:1305236"/>
<dbReference type="CTD" id="5719"/>
<dbReference type="RGD" id="1305236">
    <property type="gene designation" value="Psmd13"/>
</dbReference>
<dbReference type="VEuPathDB" id="HostDB:ENSRNOG00000014109"/>
<dbReference type="eggNOG" id="KOG2908">
    <property type="taxonomic scope" value="Eukaryota"/>
</dbReference>
<dbReference type="HOGENOM" id="CLU_042989_0_0_1"/>
<dbReference type="InParanoid" id="B0BN93"/>
<dbReference type="OrthoDB" id="9744at9989"/>
<dbReference type="PhylomeDB" id="B0BN93"/>
<dbReference type="TreeFam" id="TF105612"/>
<dbReference type="Reactome" id="R-RNO-1169091">
    <property type="pathway name" value="Activation of NF-kappaB in B cells"/>
</dbReference>
<dbReference type="Reactome" id="R-RNO-1234176">
    <property type="pathway name" value="Oxygen-dependent proline hydroxylation of Hypoxia-inducible Factor Alpha"/>
</dbReference>
<dbReference type="Reactome" id="R-RNO-1236978">
    <property type="pathway name" value="Cross-presentation of soluble exogenous antigens (endosomes)"/>
</dbReference>
<dbReference type="Reactome" id="R-RNO-174084">
    <property type="pathway name" value="Autodegradation of Cdh1 by Cdh1:APC/C"/>
</dbReference>
<dbReference type="Reactome" id="R-RNO-174113">
    <property type="pathway name" value="SCF-beta-TrCP mediated degradation of Emi1"/>
</dbReference>
<dbReference type="Reactome" id="R-RNO-174154">
    <property type="pathway name" value="APC/C:Cdc20 mediated degradation of Securin"/>
</dbReference>
<dbReference type="Reactome" id="R-RNO-174178">
    <property type="pathway name" value="APC/C:Cdh1 mediated degradation of Cdc20 and other APC/C:Cdh1 targeted proteins in late mitosis/early G1"/>
</dbReference>
<dbReference type="Reactome" id="R-RNO-174184">
    <property type="pathway name" value="Cdc20:Phospho-APC/C mediated degradation of Cyclin A"/>
</dbReference>
<dbReference type="Reactome" id="R-RNO-187577">
    <property type="pathway name" value="SCF(Skp2)-mediated degradation of p27/p21"/>
</dbReference>
<dbReference type="Reactome" id="R-RNO-195253">
    <property type="pathway name" value="Degradation of beta-catenin by the destruction complex"/>
</dbReference>
<dbReference type="Reactome" id="R-RNO-2467813">
    <property type="pathway name" value="Separation of Sister Chromatids"/>
</dbReference>
<dbReference type="Reactome" id="R-RNO-349425">
    <property type="pathway name" value="Autodegradation of the E3 ubiquitin ligase COP1"/>
</dbReference>
<dbReference type="Reactome" id="R-RNO-350562">
    <property type="pathway name" value="Regulation of ornithine decarboxylase (ODC)"/>
</dbReference>
<dbReference type="Reactome" id="R-RNO-382556">
    <property type="pathway name" value="ABC-family proteins mediated transport"/>
</dbReference>
<dbReference type="Reactome" id="R-RNO-450408">
    <property type="pathway name" value="AUF1 (hnRNP D0) binds and destabilizes mRNA"/>
</dbReference>
<dbReference type="Reactome" id="R-RNO-4608870">
    <property type="pathway name" value="Asymmetric localization of PCP proteins"/>
</dbReference>
<dbReference type="Reactome" id="R-RNO-4641257">
    <property type="pathway name" value="Degradation of AXIN"/>
</dbReference>
<dbReference type="Reactome" id="R-RNO-4641258">
    <property type="pathway name" value="Degradation of DVL"/>
</dbReference>
<dbReference type="Reactome" id="R-RNO-5358346">
    <property type="pathway name" value="Hedgehog ligand biogenesis"/>
</dbReference>
<dbReference type="Reactome" id="R-RNO-5607761">
    <property type="pathway name" value="Dectin-1 mediated noncanonical NF-kB signaling"/>
</dbReference>
<dbReference type="Reactome" id="R-RNO-5610780">
    <property type="pathway name" value="Degradation of GLI1 by the proteasome"/>
</dbReference>
<dbReference type="Reactome" id="R-RNO-5610785">
    <property type="pathway name" value="GLI3 is processed to GLI3R by the proteasome"/>
</dbReference>
<dbReference type="Reactome" id="R-RNO-5632684">
    <property type="pathway name" value="Hedgehog 'on' state"/>
</dbReference>
<dbReference type="Reactome" id="R-RNO-5658442">
    <property type="pathway name" value="Regulation of RAS by GAPs"/>
</dbReference>
<dbReference type="Reactome" id="R-RNO-5668541">
    <property type="pathway name" value="TNFR2 non-canonical NF-kB pathway"/>
</dbReference>
<dbReference type="Reactome" id="R-RNO-5676590">
    <property type="pathway name" value="NIK--&gt;noncanonical NF-kB signaling"/>
</dbReference>
<dbReference type="Reactome" id="R-RNO-5687128">
    <property type="pathway name" value="MAPK6/MAPK4 signaling"/>
</dbReference>
<dbReference type="Reactome" id="R-RNO-5689603">
    <property type="pathway name" value="UCH proteinases"/>
</dbReference>
<dbReference type="Reactome" id="R-RNO-5689880">
    <property type="pathway name" value="Ub-specific processing proteases"/>
</dbReference>
<dbReference type="Reactome" id="R-RNO-6798695">
    <property type="pathway name" value="Neutrophil degranulation"/>
</dbReference>
<dbReference type="Reactome" id="R-RNO-68867">
    <property type="pathway name" value="Assembly of the pre-replicative complex"/>
</dbReference>
<dbReference type="Reactome" id="R-RNO-68949">
    <property type="pathway name" value="Orc1 removal from chromatin"/>
</dbReference>
<dbReference type="Reactome" id="R-RNO-69017">
    <property type="pathway name" value="CDK-mediated phosphorylation and removal of Cdc6"/>
</dbReference>
<dbReference type="Reactome" id="R-RNO-69481">
    <property type="pathway name" value="G2/M Checkpoints"/>
</dbReference>
<dbReference type="Reactome" id="R-RNO-69601">
    <property type="pathway name" value="Ubiquitin Mediated Degradation of Phosphorylated Cdc25A"/>
</dbReference>
<dbReference type="Reactome" id="R-RNO-75815">
    <property type="pathway name" value="Ubiquitin-dependent degradation of Cyclin D"/>
</dbReference>
<dbReference type="Reactome" id="R-RNO-8852276">
    <property type="pathway name" value="The role of GTSE1 in G2/M progression after G2 checkpoint"/>
</dbReference>
<dbReference type="Reactome" id="R-RNO-8854050">
    <property type="pathway name" value="FBXL7 down-regulates AURKA during mitotic entry and in early mitosis"/>
</dbReference>
<dbReference type="Reactome" id="R-RNO-8939236">
    <property type="pathway name" value="RUNX1 regulates transcription of genes involved in differentiation of HSCs"/>
</dbReference>
<dbReference type="Reactome" id="R-RNO-8941858">
    <property type="pathway name" value="Regulation of RUNX3 expression and activity"/>
</dbReference>
<dbReference type="Reactome" id="R-RNO-8948751">
    <property type="pathway name" value="Regulation of PTEN stability and activity"/>
</dbReference>
<dbReference type="Reactome" id="R-RNO-8951664">
    <property type="pathway name" value="Neddylation"/>
</dbReference>
<dbReference type="Reactome" id="R-RNO-9755511">
    <property type="pathway name" value="KEAP1-NFE2L2 pathway"/>
</dbReference>
<dbReference type="Reactome" id="R-RNO-9762114">
    <property type="pathway name" value="GSK3B and BTRC:CUL1-mediated-degradation of NFE2L2"/>
</dbReference>
<dbReference type="Reactome" id="R-RNO-983168">
    <property type="pathway name" value="Antigen processing: Ubiquitination &amp; Proteasome degradation"/>
</dbReference>
<dbReference type="Reactome" id="R-RNO-9907900">
    <property type="pathway name" value="Proteasome assembly"/>
</dbReference>
<dbReference type="PRO" id="PR:B0BN93"/>
<dbReference type="Proteomes" id="UP000002494">
    <property type="component" value="Chromosome 1"/>
</dbReference>
<dbReference type="Proteomes" id="UP000234681">
    <property type="component" value="Chromosome 1"/>
</dbReference>
<dbReference type="Bgee" id="ENSRNOG00000014109">
    <property type="expression patterns" value="Expressed in thymus and 20 other cell types or tissues"/>
</dbReference>
<dbReference type="GO" id="GO:0005829">
    <property type="term" value="C:cytosol"/>
    <property type="evidence" value="ECO:0000318"/>
    <property type="project" value="GO_Central"/>
</dbReference>
<dbReference type="GO" id="GO:0005634">
    <property type="term" value="C:nucleus"/>
    <property type="evidence" value="ECO:0000318"/>
    <property type="project" value="GO_Central"/>
</dbReference>
<dbReference type="GO" id="GO:0022624">
    <property type="term" value="C:proteasome accessory complex"/>
    <property type="evidence" value="ECO:0000250"/>
    <property type="project" value="UniProtKB"/>
</dbReference>
<dbReference type="GO" id="GO:0000502">
    <property type="term" value="C:proteasome complex"/>
    <property type="evidence" value="ECO:0000266"/>
    <property type="project" value="RGD"/>
</dbReference>
<dbReference type="GO" id="GO:0005838">
    <property type="term" value="C:proteasome regulatory particle"/>
    <property type="evidence" value="ECO:0000266"/>
    <property type="project" value="RGD"/>
</dbReference>
<dbReference type="GO" id="GO:0008541">
    <property type="term" value="C:proteasome regulatory particle, lid subcomplex"/>
    <property type="evidence" value="ECO:0000318"/>
    <property type="project" value="GO_Central"/>
</dbReference>
<dbReference type="GO" id="GO:0005198">
    <property type="term" value="F:structural molecule activity"/>
    <property type="evidence" value="ECO:0000318"/>
    <property type="project" value="GO_Central"/>
</dbReference>
<dbReference type="GO" id="GO:0007127">
    <property type="term" value="P:meiosis I"/>
    <property type="evidence" value="ECO:0000266"/>
    <property type="project" value="RGD"/>
</dbReference>
<dbReference type="GO" id="GO:0006511">
    <property type="term" value="P:ubiquitin-dependent protein catabolic process"/>
    <property type="evidence" value="ECO:0000318"/>
    <property type="project" value="GO_Central"/>
</dbReference>
<dbReference type="InterPro" id="IPR000717">
    <property type="entry name" value="PCI_dom"/>
</dbReference>
<dbReference type="InterPro" id="IPR054179">
    <property type="entry name" value="PSD13_N"/>
</dbReference>
<dbReference type="InterPro" id="IPR035298">
    <property type="entry name" value="PSMD13"/>
</dbReference>
<dbReference type="InterPro" id="IPR036390">
    <property type="entry name" value="WH_DNA-bd_sf"/>
</dbReference>
<dbReference type="PANTHER" id="PTHR10539">
    <property type="entry name" value="26S PROTEASOME NON-ATPASE REGULATORY SUBUNIT 13"/>
    <property type="match status" value="1"/>
</dbReference>
<dbReference type="PANTHER" id="PTHR10539:SF0">
    <property type="entry name" value="26S PROTEASOME NON-ATPASE REGULATORY SUBUNIT 13"/>
    <property type="match status" value="1"/>
</dbReference>
<dbReference type="Pfam" id="PF01399">
    <property type="entry name" value="PCI"/>
    <property type="match status" value="1"/>
</dbReference>
<dbReference type="Pfam" id="PF22037">
    <property type="entry name" value="PSD13_N"/>
    <property type="match status" value="1"/>
</dbReference>
<dbReference type="SMART" id="SM00088">
    <property type="entry name" value="PINT"/>
    <property type="match status" value="1"/>
</dbReference>
<dbReference type="SUPFAM" id="SSF46785">
    <property type="entry name" value="Winged helix' DNA-binding domain"/>
    <property type="match status" value="1"/>
</dbReference>
<dbReference type="PROSITE" id="PS50250">
    <property type="entry name" value="PCI"/>
    <property type="match status" value="1"/>
</dbReference>
<keyword id="KW-0002">3D-structure</keyword>
<keyword id="KW-0007">Acetylation</keyword>
<keyword id="KW-0647">Proteasome</keyword>
<keyword id="KW-1185">Reference proteome</keyword>
<reference evidence="5 7" key="1">
    <citation type="submission" date="2005-09" db="EMBL/GenBank/DDBJ databases">
        <authorList>
            <person name="Mural R.J."/>
            <person name="Adams M.D."/>
            <person name="Myers E.W."/>
            <person name="Smith H.O."/>
            <person name="Venter J.C."/>
        </authorList>
    </citation>
    <scope>NUCLEOTIDE SEQUENCE [LARGE SCALE GENOMIC DNA]</scope>
    <source>
        <strain evidence="7">Brown Norway</strain>
    </source>
</reference>
<reference evidence="6" key="2">
    <citation type="journal article" date="2004" name="Genome Res.">
        <title>The status, quality, and expansion of the NIH full-length cDNA project: the Mammalian Gene Collection (MGC).</title>
        <authorList>
            <consortium name="The MGC Project Team"/>
        </authorList>
    </citation>
    <scope>NUCLEOTIDE SEQUENCE [LARGE SCALE MRNA]</scope>
    <source>
        <strain evidence="4">Brown Norway/Mcwi</strain>
        <tissue evidence="6">Embryo</tissue>
    </source>
</reference>
<reference evidence="5 7" key="3">
    <citation type="submission" date="2009-03" db="UniProtKB">
        <authorList>
            <person name="Maurya D.K."/>
            <person name="Bhargava P."/>
        </authorList>
    </citation>
    <scope>IDENTIFICATION BY MASS SPECTROMETRY</scope>
</reference>
<sequence>MKDVPAFLQQSQSSGPGQAAVWHRLEELYTKKLWHQLTLQVLDFVQDPCFAQGDGLIKLYENFISEFEHRVNPLSLVEIILHVVRQMTDPNVALTFLEKTREKVKSSDEAVILCKTAIGALKLNIGDLQATKETIEDVEEMLNNLPGVTSVHSRFYDLSSKYYQTIGNHASYYKDALRFLGCVDIKDLPVSEQQERAFTLGLAGLLGEGVFNFGELLMHPVLESLRNTDRQWLIDTLYAFNSGDVDRFQTLKSAWGQQPDLAANEAQLLRKIQLLCLMEMTFTRPANHRQLTFEEIAKSAKITVNKVELLVMKALSVGLVRGSIDEVDKRVHMTWVQPRVLDLQQIKGMKDRLELWCTDVKSMELLVEHQAQDILT</sequence>
<feature type="chain" id="PRO_0000371228" description="26S proteasome non-ATPase regulatory subunit 13">
    <location>
        <begin position="1"/>
        <end position="376"/>
    </location>
</feature>
<feature type="domain" description="PCI" evidence="3">
    <location>
        <begin position="171"/>
        <end position="338"/>
    </location>
</feature>
<feature type="modified residue" description="N6-acetyllysine" evidence="1">
    <location>
        <position position="298"/>
    </location>
</feature>
<gene>
    <name evidence="6 8" type="primary">Psmd13</name>
</gene>
<evidence type="ECO:0000250" key="1">
    <source>
        <dbReference type="UniProtKB" id="Q9UNM6"/>
    </source>
</evidence>
<evidence type="ECO:0000255" key="2"/>
<evidence type="ECO:0000255" key="3">
    <source>
        <dbReference type="PROSITE-ProRule" id="PRU01185"/>
    </source>
</evidence>
<evidence type="ECO:0000269" key="4">
    <source>
    </source>
</evidence>
<evidence type="ECO:0000305" key="5"/>
<evidence type="ECO:0000312" key="6">
    <source>
        <dbReference type="EMBL" id="AAI58733.1"/>
    </source>
</evidence>
<evidence type="ECO:0000312" key="7">
    <source>
        <dbReference type="EMBL" id="EDM11946.1"/>
    </source>
</evidence>
<evidence type="ECO:0000312" key="8">
    <source>
        <dbReference type="RGD" id="1305236"/>
    </source>
</evidence>
<accession>B0BN93</accession>